<sequence length="287" mass="31000">MSTASQHLYKRRRLINAAAITISCIAALFGLFFLIWILWTLISKGLPGIDLDLFTKITPPPMQKGGLANAFLGSAIMCLLAIVIGTPVGIAAGTWLAEYGNTSQTSTVVRFVNDILLSAPSIVLGLFVYTLYVMHTGGHFSAFSGALALVFIVLPIVVRTTDEMLRLVPGQMREAALSLGIPQWKMITQVLYRSASAGILTGILLALARISGETAPLLFTAFGNQYWSSNIFQPIASLPLVMNQFASSPYKSWQLLAWSGALVLTVFVLLVSLGARALLLRNKIPNT</sequence>
<proteinExistence type="inferred from homology"/>
<organism>
    <name type="scientific">Xylella fastidiosa (strain Temecula1 / ATCC 700964)</name>
    <dbReference type="NCBI Taxonomy" id="183190"/>
    <lineage>
        <taxon>Bacteria</taxon>
        <taxon>Pseudomonadati</taxon>
        <taxon>Pseudomonadota</taxon>
        <taxon>Gammaproteobacteria</taxon>
        <taxon>Lysobacterales</taxon>
        <taxon>Lysobacteraceae</taxon>
        <taxon>Xylella</taxon>
    </lineage>
</organism>
<gene>
    <name type="primary">pstA</name>
    <name type="ordered locus">PD_1204</name>
</gene>
<reference key="1">
    <citation type="journal article" date="2003" name="J. Bacteriol.">
        <title>Comparative analyses of the complete genome sequences of Pierce's disease and citrus variegated chlorosis strains of Xylella fastidiosa.</title>
        <authorList>
            <person name="Van Sluys M.A."/>
            <person name="de Oliveira M.C."/>
            <person name="Monteiro-Vitorello C.B."/>
            <person name="Miyaki C.Y."/>
            <person name="Furlan L.R."/>
            <person name="Camargo L.E.A."/>
            <person name="da Silva A.C.R."/>
            <person name="Moon D.H."/>
            <person name="Takita M.A."/>
            <person name="Lemos E.G.M."/>
            <person name="Machado M.A."/>
            <person name="Ferro M.I.T."/>
            <person name="da Silva F.R."/>
            <person name="Goldman M.H.S."/>
            <person name="Goldman G.H."/>
            <person name="Lemos M.V.F."/>
            <person name="El-Dorry H."/>
            <person name="Tsai S.M."/>
            <person name="Carrer H."/>
            <person name="Carraro D.M."/>
            <person name="de Oliveira R.C."/>
            <person name="Nunes L.R."/>
            <person name="Siqueira W.J."/>
            <person name="Coutinho L.L."/>
            <person name="Kimura E.T."/>
            <person name="Ferro E.S."/>
            <person name="Harakava R."/>
            <person name="Kuramae E.E."/>
            <person name="Marino C.L."/>
            <person name="Giglioti E."/>
            <person name="Abreu I.L."/>
            <person name="Alves L.M.C."/>
            <person name="do Amaral A.M."/>
            <person name="Baia G.S."/>
            <person name="Blanco S.R."/>
            <person name="Brito M.S."/>
            <person name="Cannavan F.S."/>
            <person name="Celestino A.V."/>
            <person name="da Cunha A.F."/>
            <person name="Fenille R.C."/>
            <person name="Ferro J.A."/>
            <person name="Formighieri E.F."/>
            <person name="Kishi L.T."/>
            <person name="Leoni S.G."/>
            <person name="Oliveira A.R."/>
            <person name="Rosa V.E. Jr."/>
            <person name="Sassaki F.T."/>
            <person name="Sena J.A.D."/>
            <person name="de Souza A.A."/>
            <person name="Truffi D."/>
            <person name="Tsukumo F."/>
            <person name="Yanai G.M."/>
            <person name="Zaros L.G."/>
            <person name="Civerolo E.L."/>
            <person name="Simpson A.J.G."/>
            <person name="Almeida N.F. Jr."/>
            <person name="Setubal J.C."/>
            <person name="Kitajima J.P."/>
        </authorList>
    </citation>
    <scope>NUCLEOTIDE SEQUENCE [LARGE SCALE GENOMIC DNA]</scope>
    <source>
        <strain>Temecula1 / ATCC 700964</strain>
    </source>
</reference>
<comment type="function">
    <text evidence="1">Part of a binding-protein-dependent transport system for phosphate; probably responsible for the translocation of the substrate across the membrane.</text>
</comment>
<comment type="subcellular location">
    <subcellularLocation>
        <location evidence="1">Cell inner membrane</location>
        <topology evidence="2">Multi-pass membrane protein</topology>
    </subcellularLocation>
</comment>
<comment type="similarity">
    <text evidence="3">Belongs to the binding-protein-dependent transport system permease family. CysTW subfamily.</text>
</comment>
<dbReference type="EMBL" id="AE009442">
    <property type="protein sequence ID" value="AAO29055.1"/>
    <property type="molecule type" value="Genomic_DNA"/>
</dbReference>
<dbReference type="RefSeq" id="WP_004086094.1">
    <property type="nucleotide sequence ID" value="NC_004556.1"/>
</dbReference>
<dbReference type="SMR" id="Q87C89"/>
<dbReference type="GeneID" id="93905004"/>
<dbReference type="KEGG" id="xft:PD_1204"/>
<dbReference type="HOGENOM" id="CLU_033621_2_0_6"/>
<dbReference type="Proteomes" id="UP000002516">
    <property type="component" value="Chromosome"/>
</dbReference>
<dbReference type="GO" id="GO:0005886">
    <property type="term" value="C:plasma membrane"/>
    <property type="evidence" value="ECO:0007669"/>
    <property type="project" value="UniProtKB-SubCell"/>
</dbReference>
<dbReference type="GO" id="GO:0005315">
    <property type="term" value="F:phosphate transmembrane transporter activity"/>
    <property type="evidence" value="ECO:0007669"/>
    <property type="project" value="InterPro"/>
</dbReference>
<dbReference type="GO" id="GO:0035435">
    <property type="term" value="P:phosphate ion transmembrane transport"/>
    <property type="evidence" value="ECO:0007669"/>
    <property type="project" value="InterPro"/>
</dbReference>
<dbReference type="CDD" id="cd06261">
    <property type="entry name" value="TM_PBP2"/>
    <property type="match status" value="1"/>
</dbReference>
<dbReference type="Gene3D" id="1.10.3720.10">
    <property type="entry name" value="MetI-like"/>
    <property type="match status" value="1"/>
</dbReference>
<dbReference type="InterPro" id="IPR000515">
    <property type="entry name" value="MetI-like"/>
</dbReference>
<dbReference type="InterPro" id="IPR035906">
    <property type="entry name" value="MetI-like_sf"/>
</dbReference>
<dbReference type="InterPro" id="IPR005672">
    <property type="entry name" value="Phosphate_PstA"/>
</dbReference>
<dbReference type="InterPro" id="IPR051408">
    <property type="entry name" value="Phosphate_transprt_permease"/>
</dbReference>
<dbReference type="NCBIfam" id="TIGR00974">
    <property type="entry name" value="3a0107s02c"/>
    <property type="match status" value="1"/>
</dbReference>
<dbReference type="PANTHER" id="PTHR42922">
    <property type="entry name" value="PHOSPHATE TRANSPORT SYSTEM PERMEASE PROTEIN PSTA"/>
    <property type="match status" value="1"/>
</dbReference>
<dbReference type="PANTHER" id="PTHR42922:SF1">
    <property type="entry name" value="PHOSPHATE TRANSPORT SYSTEM PERMEASE PROTEIN PSTA"/>
    <property type="match status" value="1"/>
</dbReference>
<dbReference type="Pfam" id="PF00528">
    <property type="entry name" value="BPD_transp_1"/>
    <property type="match status" value="1"/>
</dbReference>
<dbReference type="SUPFAM" id="SSF161098">
    <property type="entry name" value="MetI-like"/>
    <property type="match status" value="1"/>
</dbReference>
<dbReference type="PROSITE" id="PS50928">
    <property type="entry name" value="ABC_TM1"/>
    <property type="match status" value="1"/>
</dbReference>
<accession>Q87C89</accession>
<protein>
    <recommendedName>
        <fullName>Phosphate transport system permease protein PstA</fullName>
    </recommendedName>
</protein>
<evidence type="ECO:0000250" key="1"/>
<evidence type="ECO:0000255" key="2">
    <source>
        <dbReference type="PROSITE-ProRule" id="PRU00441"/>
    </source>
</evidence>
<evidence type="ECO:0000305" key="3"/>
<feature type="chain" id="PRO_0000060198" description="Phosphate transport system permease protein PstA">
    <location>
        <begin position="1"/>
        <end position="287"/>
    </location>
</feature>
<feature type="transmembrane region" description="Helical" evidence="2">
    <location>
        <begin position="22"/>
        <end position="42"/>
    </location>
</feature>
<feature type="transmembrane region" description="Helical" evidence="2">
    <location>
        <begin position="70"/>
        <end position="90"/>
    </location>
</feature>
<feature type="transmembrane region" description="Helical" evidence="2">
    <location>
        <begin position="115"/>
        <end position="135"/>
    </location>
</feature>
<feature type="transmembrane region" description="Helical" evidence="2">
    <location>
        <begin position="138"/>
        <end position="158"/>
    </location>
</feature>
<feature type="transmembrane region" description="Helical" evidence="2">
    <location>
        <begin position="199"/>
        <end position="219"/>
    </location>
</feature>
<feature type="transmembrane region" description="Helical" evidence="2">
    <location>
        <begin position="255"/>
        <end position="275"/>
    </location>
</feature>
<feature type="domain" description="ABC transmembrane type-1" evidence="2">
    <location>
        <begin position="71"/>
        <end position="279"/>
    </location>
</feature>
<name>PSTA_XYLFT</name>
<keyword id="KW-0997">Cell inner membrane</keyword>
<keyword id="KW-1003">Cell membrane</keyword>
<keyword id="KW-0472">Membrane</keyword>
<keyword id="KW-0592">Phosphate transport</keyword>
<keyword id="KW-1185">Reference proteome</keyword>
<keyword id="KW-0812">Transmembrane</keyword>
<keyword id="KW-1133">Transmembrane helix</keyword>
<keyword id="KW-0813">Transport</keyword>